<evidence type="ECO:0000255" key="1"/>
<evidence type="ECO:0000269" key="2">
    <source>
    </source>
</evidence>
<evidence type="ECO:0000269" key="3">
    <source>
    </source>
</evidence>
<evidence type="ECO:0000269" key="4">
    <source>
    </source>
</evidence>
<evidence type="ECO:0000269" key="5">
    <source>
    </source>
</evidence>
<evidence type="ECO:0000269" key="6">
    <source>
    </source>
</evidence>
<evidence type="ECO:0000269" key="7">
    <source>
    </source>
</evidence>
<evidence type="ECO:0000269" key="8">
    <source>
    </source>
</evidence>
<evidence type="ECO:0000303" key="9">
    <source>
    </source>
</evidence>
<evidence type="ECO:0000303" key="10">
    <source>
    </source>
</evidence>
<evidence type="ECO:0000303" key="11">
    <source>
    </source>
</evidence>
<evidence type="ECO:0000303" key="12">
    <source>
    </source>
</evidence>
<evidence type="ECO:0000305" key="13"/>
<evidence type="ECO:0007829" key="14">
    <source>
        <dbReference type="PDB" id="2FDB"/>
    </source>
</evidence>
<feature type="signal peptide" evidence="1">
    <location>
        <begin position="1"/>
        <end position="22"/>
    </location>
</feature>
<feature type="chain" id="PRO_0000008970" description="Fibroblast growth factor 8">
    <location>
        <begin position="23"/>
        <end position="233"/>
    </location>
</feature>
<feature type="glycosylation site" description="N-linked (GlcNAc...) asparagine" evidence="1">
    <location>
        <position position="155"/>
    </location>
</feature>
<feature type="splice variant" id="VSP_001525" description="In isoform FGF-8A." evidence="10 11 12">
    <location>
        <begin position="24"/>
        <end position="52"/>
    </location>
</feature>
<feature type="splice variant" id="VSP_001524" description="In isoform FGF-8B." evidence="12">
    <original>EGPGRGPALGRELASLFRAGREPQGVSQ</original>
    <variation>VTVQSSPNFT</variation>
    <location>
        <begin position="24"/>
        <end position="51"/>
    </location>
</feature>
<feature type="splice variant" id="VSP_001526" description="In isoform FGF-8F." evidence="9 11">
    <original>Q</original>
    <variation>QVTVQSSPNFTQ</variation>
    <location>
        <position position="52"/>
    </location>
</feature>
<feature type="sequence variant" id="VAR_057962" description="In HH6; phenotype consistent with normosmic idiopathic hypogonadotropic hypogonadism; dbSNP:rs137852659." evidence="4">
    <original>H</original>
    <variation>N</variation>
    <location>
        <position position="14"/>
    </location>
</feature>
<feature type="sequence variant" id="VAR_057963" description="In HH6; phenotype consistent with Kallmann syndrome; dbSNP:rs137852660." evidence="4">
    <original>P</original>
    <variation>L</variation>
    <location>
        <position position="26"/>
    </location>
</feature>
<feature type="sequence variant" id="VAR_057964" description="In HH6; phenotype consistent with normosmic idiopathic hypogonadotropic hypogonadism; some patients also carry mutations in FGFR1; dbSNP:rs137852661." evidence="4 6">
    <original>F</original>
    <variation>L</variation>
    <location>
        <position position="40"/>
    </location>
</feature>
<feature type="sequence variant" id="VAR_057965" description="In HH6; phenotype consistent with normosmic idiopathic hypogonadotropic hypogonadism; some patients also carry mutations in FGFR1; dbSNP:rs137852662." evidence="4 6">
    <original>K</original>
    <variation>E</variation>
    <location>
        <position position="89"/>
    </location>
</feature>
<feature type="sequence variant" id="VAR_057966" description="In HH6; phenotype consistent with Kallmann syndrome; dbSNP:rs137852663." evidence="4">
    <original>R</original>
    <variation>G</variation>
    <location>
        <position position="116"/>
    </location>
</feature>
<feature type="sequence variant" id="VAR_057967" description="In HH6; phenotype consistent with normosmic idiopathic hypogonadotropic hypogonadism; dbSNP:rs137852664." evidence="4">
    <original>T</original>
    <variation>M</variation>
    <location>
        <position position="218"/>
    </location>
</feature>
<feature type="helix" evidence="14">
    <location>
        <begin position="52"/>
        <end position="57"/>
    </location>
</feature>
<feature type="strand" evidence="14">
    <location>
        <begin position="63"/>
        <end position="65"/>
    </location>
</feature>
<feature type="strand" evidence="14">
    <location>
        <begin position="69"/>
        <end position="76"/>
    </location>
</feature>
<feature type="turn" evidence="14">
    <location>
        <begin position="77"/>
        <end position="79"/>
    </location>
</feature>
<feature type="strand" evidence="14">
    <location>
        <begin position="80"/>
        <end position="85"/>
    </location>
</feature>
<feature type="strand" evidence="14">
    <location>
        <begin position="91"/>
        <end position="95"/>
    </location>
</feature>
<feature type="helix" evidence="14">
    <location>
        <begin position="100"/>
        <end position="102"/>
    </location>
</feature>
<feature type="strand" evidence="14">
    <location>
        <begin position="104"/>
        <end position="110"/>
    </location>
</feature>
<feature type="turn" evidence="14">
    <location>
        <begin position="111"/>
        <end position="113"/>
    </location>
</feature>
<feature type="strand" evidence="14">
    <location>
        <begin position="114"/>
        <end position="119"/>
    </location>
</feature>
<feature type="turn" evidence="14">
    <location>
        <begin position="120"/>
        <end position="122"/>
    </location>
</feature>
<feature type="strand" evidence="14">
    <location>
        <begin position="125"/>
        <end position="128"/>
    </location>
</feature>
<feature type="strand" evidence="14">
    <location>
        <begin position="134"/>
        <end position="138"/>
    </location>
</feature>
<feature type="helix" evidence="14">
    <location>
        <begin position="143"/>
        <end position="145"/>
    </location>
</feature>
<feature type="strand" evidence="14">
    <location>
        <begin position="146"/>
        <end position="151"/>
    </location>
</feature>
<feature type="strand" evidence="14">
    <location>
        <begin position="157"/>
        <end position="164"/>
    </location>
</feature>
<feature type="helix" evidence="14">
    <location>
        <begin position="180"/>
        <end position="182"/>
    </location>
</feature>
<feature type="helix" evidence="14">
    <location>
        <begin position="188"/>
        <end position="190"/>
    </location>
</feature>
<feature type="strand" evidence="14">
    <location>
        <begin position="192"/>
        <end position="195"/>
    </location>
</feature>
<dbReference type="EMBL" id="S78466">
    <property type="protein sequence ID" value="AAB34255.1"/>
    <property type="molecule type" value="Genomic_DNA"/>
</dbReference>
<dbReference type="EMBL" id="S78462">
    <property type="protein sequence ID" value="AAB34255.1"/>
    <property type="status" value="JOINED"/>
    <property type="molecule type" value="Genomic_DNA"/>
</dbReference>
<dbReference type="EMBL" id="S78463">
    <property type="protein sequence ID" value="AAB34255.1"/>
    <property type="status" value="JOINED"/>
    <property type="molecule type" value="Genomic_DNA"/>
</dbReference>
<dbReference type="EMBL" id="S78464">
    <property type="protein sequence ID" value="AAB34255.1"/>
    <property type="status" value="JOINED"/>
    <property type="molecule type" value="Genomic_DNA"/>
</dbReference>
<dbReference type="EMBL" id="S78465">
    <property type="protein sequence ID" value="AAB34255.1"/>
    <property type="status" value="JOINED"/>
    <property type="molecule type" value="Genomic_DNA"/>
</dbReference>
<dbReference type="EMBL" id="D38752">
    <property type="protein sequence ID" value="BAA22527.1"/>
    <property type="molecule type" value="Genomic_DNA"/>
</dbReference>
<dbReference type="EMBL" id="U46213">
    <property type="protein sequence ID" value="AAB40955.1"/>
    <property type="molecule type" value="mRNA"/>
</dbReference>
<dbReference type="EMBL" id="U46212">
    <property type="protein sequence ID" value="AAB40954.1"/>
    <property type="molecule type" value="mRNA"/>
</dbReference>
<dbReference type="EMBL" id="U46211">
    <property type="protein sequence ID" value="AAB40953.1"/>
    <property type="molecule type" value="mRNA"/>
</dbReference>
<dbReference type="EMBL" id="U47011">
    <property type="protein sequence ID" value="AAC50784.1"/>
    <property type="molecule type" value="Genomic_DNA"/>
</dbReference>
<dbReference type="EMBL" id="U47009">
    <property type="protein sequence ID" value="AAC50784.1"/>
    <property type="status" value="JOINED"/>
    <property type="molecule type" value="Genomic_DNA"/>
</dbReference>
<dbReference type="EMBL" id="U47010">
    <property type="protein sequence ID" value="AAC50784.1"/>
    <property type="status" value="JOINED"/>
    <property type="molecule type" value="Genomic_DNA"/>
</dbReference>
<dbReference type="EMBL" id="U47011">
    <property type="protein sequence ID" value="AAC50785.1"/>
    <property type="molecule type" value="Genomic_DNA"/>
</dbReference>
<dbReference type="EMBL" id="U47009">
    <property type="protein sequence ID" value="AAC50785.1"/>
    <property type="status" value="JOINED"/>
    <property type="molecule type" value="Genomic_DNA"/>
</dbReference>
<dbReference type="EMBL" id="U47010">
    <property type="protein sequence ID" value="AAC50785.1"/>
    <property type="status" value="JOINED"/>
    <property type="molecule type" value="Genomic_DNA"/>
</dbReference>
<dbReference type="EMBL" id="U47011">
    <property type="protein sequence ID" value="AAC50782.1"/>
    <property type="molecule type" value="Genomic_DNA"/>
</dbReference>
<dbReference type="EMBL" id="U47009">
    <property type="protein sequence ID" value="AAC50782.1"/>
    <property type="status" value="JOINED"/>
    <property type="molecule type" value="Genomic_DNA"/>
</dbReference>
<dbReference type="EMBL" id="U47010">
    <property type="protein sequence ID" value="AAC50782.1"/>
    <property type="status" value="JOINED"/>
    <property type="molecule type" value="Genomic_DNA"/>
</dbReference>
<dbReference type="EMBL" id="U36223">
    <property type="protein sequence ID" value="AAB17893.1"/>
    <property type="molecule type" value="mRNA"/>
</dbReference>
<dbReference type="EMBL" id="U36228">
    <property type="protein sequence ID" value="AAB17894.1"/>
    <property type="molecule type" value="Genomic_DNA"/>
</dbReference>
<dbReference type="EMBL" id="U36225">
    <property type="protein sequence ID" value="AAB17894.1"/>
    <property type="status" value="JOINED"/>
    <property type="molecule type" value="Genomic_DNA"/>
</dbReference>
<dbReference type="EMBL" id="U36226">
    <property type="protein sequence ID" value="AAB17894.1"/>
    <property type="status" value="JOINED"/>
    <property type="molecule type" value="Genomic_DNA"/>
</dbReference>
<dbReference type="EMBL" id="U36227">
    <property type="protein sequence ID" value="AAB17894.1"/>
    <property type="status" value="JOINED"/>
    <property type="molecule type" value="Genomic_DNA"/>
</dbReference>
<dbReference type="EMBL" id="U47011">
    <property type="protein sequence ID" value="AAC50783.1"/>
    <property type="molecule type" value="Genomic_DNA"/>
</dbReference>
<dbReference type="EMBL" id="U47009">
    <property type="protein sequence ID" value="AAC50783.1"/>
    <property type="status" value="JOINED"/>
    <property type="molecule type" value="Genomic_DNA"/>
</dbReference>
<dbReference type="EMBL" id="U47010">
    <property type="protein sequence ID" value="AAC50783.1"/>
    <property type="status" value="JOINED"/>
    <property type="molecule type" value="Genomic_DNA"/>
</dbReference>
<dbReference type="EMBL" id="U56978">
    <property type="protein sequence ID" value="AAB03787.1"/>
    <property type="molecule type" value="mRNA"/>
</dbReference>
<dbReference type="EMBL" id="AB014615">
    <property type="protein sequence ID" value="BAA28605.1"/>
    <property type="molecule type" value="mRNA"/>
</dbReference>
<dbReference type="EMBL" id="AF520763">
    <property type="protein sequence ID" value="AAM55238.1"/>
    <property type="molecule type" value="Genomic_DNA"/>
</dbReference>
<dbReference type="EMBL" id="CH471066">
    <property type="protein sequence ID" value="EAW49746.1"/>
    <property type="molecule type" value="Genomic_DNA"/>
</dbReference>
<dbReference type="EMBL" id="BC128235">
    <property type="protein sequence ID" value="AAI28236.1"/>
    <property type="molecule type" value="mRNA"/>
</dbReference>
<dbReference type="CCDS" id="CCDS7515.1">
    <molecule id="P55075-3"/>
</dbReference>
<dbReference type="CCDS" id="CCDS7516.1">
    <molecule id="P55075-4"/>
</dbReference>
<dbReference type="CCDS" id="CCDS7517.1">
    <molecule id="P55075-1"/>
</dbReference>
<dbReference type="CCDS" id="CCDS7518.1">
    <molecule id="P55075-2"/>
</dbReference>
<dbReference type="RefSeq" id="NP_006110.1">
    <molecule id="P55075-3"/>
    <property type="nucleotide sequence ID" value="NM_006119.6"/>
</dbReference>
<dbReference type="RefSeq" id="NP_149353.1">
    <molecule id="P55075-4"/>
    <property type="nucleotide sequence ID" value="NM_033163.5"/>
</dbReference>
<dbReference type="RefSeq" id="NP_149354.1">
    <molecule id="P55075-1"/>
    <property type="nucleotide sequence ID" value="NM_033164.4"/>
</dbReference>
<dbReference type="RefSeq" id="NP_149355.1">
    <molecule id="P55075-2"/>
    <property type="nucleotide sequence ID" value="NM_033165.5"/>
</dbReference>
<dbReference type="PDB" id="2FDB">
    <property type="method" value="X-ray"/>
    <property type="resolution" value="2.28 A"/>
    <property type="chains" value="M/N=52-204"/>
</dbReference>
<dbReference type="PDBsum" id="2FDB"/>
<dbReference type="BMRB" id="P55075"/>
<dbReference type="SMR" id="P55075"/>
<dbReference type="BioGRID" id="108544">
    <property type="interactions" value="115"/>
</dbReference>
<dbReference type="DIP" id="DIP-59630N"/>
<dbReference type="FunCoup" id="P55075">
    <property type="interactions" value="1058"/>
</dbReference>
<dbReference type="IntAct" id="P55075">
    <property type="interactions" value="103"/>
</dbReference>
<dbReference type="STRING" id="9606.ENSP00000321797"/>
<dbReference type="GlyCosmos" id="P55075">
    <property type="glycosylation" value="1 site, No reported glycans"/>
</dbReference>
<dbReference type="GlyGen" id="P55075">
    <property type="glycosylation" value="1 site"/>
</dbReference>
<dbReference type="iPTMnet" id="P55075"/>
<dbReference type="PhosphoSitePlus" id="P55075"/>
<dbReference type="BioMuta" id="FGF8"/>
<dbReference type="DMDM" id="1706791"/>
<dbReference type="MassIVE" id="P55075"/>
<dbReference type="PaxDb" id="9606-ENSP00000321797"/>
<dbReference type="PeptideAtlas" id="P55075"/>
<dbReference type="ABCD" id="P55075">
    <property type="antibodies" value="5 sequenced antibodies"/>
</dbReference>
<dbReference type="Antibodypedia" id="31323">
    <property type="antibodies" value="411 antibodies from 35 providers"/>
</dbReference>
<dbReference type="DNASU" id="2253"/>
<dbReference type="Ensembl" id="ENST00000320185.7">
    <molecule id="P55075-4"/>
    <property type="protein sequence ID" value="ENSP00000321797.2"/>
    <property type="gene ID" value="ENSG00000107831.14"/>
</dbReference>
<dbReference type="Ensembl" id="ENST00000344255.8">
    <molecule id="P55075-1"/>
    <property type="protein sequence ID" value="ENSP00000340039.3"/>
    <property type="gene ID" value="ENSG00000107831.14"/>
</dbReference>
<dbReference type="Ensembl" id="ENST00000346714.7">
    <molecule id="P55075-2"/>
    <property type="protein sequence ID" value="ENSP00000344306.3"/>
    <property type="gene ID" value="ENSG00000107831.14"/>
</dbReference>
<dbReference type="Ensembl" id="ENST00000347978.2">
    <molecule id="P55075-3"/>
    <property type="protein sequence ID" value="ENSP00000321945.2"/>
    <property type="gene ID" value="ENSG00000107831.14"/>
</dbReference>
<dbReference type="GeneID" id="2253"/>
<dbReference type="KEGG" id="hsa:2253"/>
<dbReference type="MANE-Select" id="ENST00000320185.7">
    <molecule id="P55075-4"/>
    <property type="protein sequence ID" value="ENSP00000321797.2"/>
    <property type="RefSeq nucleotide sequence ID" value="NM_033163.5"/>
    <property type="RefSeq protein sequence ID" value="NP_149353.1"/>
</dbReference>
<dbReference type="UCSC" id="uc001ktp.3">
    <molecule id="P55075-1"/>
    <property type="organism name" value="human"/>
</dbReference>
<dbReference type="AGR" id="HGNC:3686"/>
<dbReference type="CTD" id="2253"/>
<dbReference type="DisGeNET" id="2253"/>
<dbReference type="GeneCards" id="FGF8"/>
<dbReference type="GeneReviews" id="FGF8"/>
<dbReference type="HGNC" id="HGNC:3686">
    <property type="gene designation" value="FGF8"/>
</dbReference>
<dbReference type="HPA" id="ENSG00000107831">
    <property type="expression patterns" value="Tissue enriched (skeletal)"/>
</dbReference>
<dbReference type="MalaCards" id="FGF8"/>
<dbReference type="MIM" id="600483">
    <property type="type" value="gene"/>
</dbReference>
<dbReference type="MIM" id="612702">
    <property type="type" value="phenotype"/>
</dbReference>
<dbReference type="MIM" id="619545">
    <property type="type" value="phenotype"/>
</dbReference>
<dbReference type="neXtProt" id="NX_P55075"/>
<dbReference type="OpenTargets" id="ENSG00000107831"/>
<dbReference type="Orphanet" id="93925">
    <property type="disease" value="Alobar holoprosencephaly"/>
</dbReference>
<dbReference type="Orphanet" id="478">
    <property type="disease" value="Kallmann syndrome"/>
</dbReference>
<dbReference type="Orphanet" id="93924">
    <property type="disease" value="Lobar holoprosencephaly"/>
</dbReference>
<dbReference type="Orphanet" id="280200">
    <property type="disease" value="Microform holoprosencephaly"/>
</dbReference>
<dbReference type="Orphanet" id="93926">
    <property type="disease" value="Midline interhemispheric variant of holoprosencephaly"/>
</dbReference>
<dbReference type="Orphanet" id="432">
    <property type="disease" value="Normosmic congenital hypogonadotropic hypogonadism"/>
</dbReference>
<dbReference type="Orphanet" id="220386">
    <property type="disease" value="Semilobar holoprosencephaly"/>
</dbReference>
<dbReference type="Orphanet" id="280195">
    <property type="disease" value="Septopreoptic holoprosencephaly"/>
</dbReference>
<dbReference type="PharmGKB" id="PA28125"/>
<dbReference type="VEuPathDB" id="HostDB:ENSG00000107831"/>
<dbReference type="eggNOG" id="KOG3885">
    <property type="taxonomic scope" value="Eukaryota"/>
</dbReference>
<dbReference type="GeneTree" id="ENSGT00940000159518"/>
<dbReference type="HOGENOM" id="CLU_090682_0_1_1"/>
<dbReference type="InParanoid" id="P55075"/>
<dbReference type="OMA" id="LFAFCHY"/>
<dbReference type="OrthoDB" id="5988014at2759"/>
<dbReference type="PAN-GO" id="P55075">
    <property type="GO annotations" value="15 GO annotations based on evolutionary models"/>
</dbReference>
<dbReference type="PhylomeDB" id="P55075"/>
<dbReference type="TreeFam" id="TF331233"/>
<dbReference type="PathwayCommons" id="P55075"/>
<dbReference type="Reactome" id="R-HSA-109704">
    <molecule id="P55075-1"/>
    <property type="pathway name" value="PI3K Cascade"/>
</dbReference>
<dbReference type="Reactome" id="R-HSA-1257604">
    <molecule id="P55075-1"/>
    <property type="pathway name" value="PIP3 activates AKT signaling"/>
</dbReference>
<dbReference type="Reactome" id="R-HSA-1839122">
    <molecule id="P55075-1"/>
    <property type="pathway name" value="Signaling by activated point mutants of FGFR1"/>
</dbReference>
<dbReference type="Reactome" id="R-HSA-1839130">
    <molecule id="P55075-1"/>
    <property type="pathway name" value="Signaling by activated point mutants of FGFR3"/>
</dbReference>
<dbReference type="Reactome" id="R-HSA-190322">
    <molecule id="P55075-1"/>
    <property type="pathway name" value="FGFR4 ligand binding and activation"/>
</dbReference>
<dbReference type="Reactome" id="R-HSA-190371">
    <molecule id="P55075-1"/>
    <property type="pathway name" value="FGFR3b ligand binding and activation"/>
</dbReference>
<dbReference type="Reactome" id="R-HSA-190372">
    <molecule id="P55075-1"/>
    <property type="pathway name" value="FGFR3c ligand binding and activation"/>
</dbReference>
<dbReference type="Reactome" id="R-HSA-190373">
    <molecule id="P55075-1"/>
    <property type="pathway name" value="FGFR1c ligand binding and activation"/>
</dbReference>
<dbReference type="Reactome" id="R-HSA-190375">
    <molecule id="P55075-1"/>
    <property type="pathway name" value="FGFR2c ligand binding and activation"/>
</dbReference>
<dbReference type="Reactome" id="R-HSA-2033519">
    <molecule id="P55075-1"/>
    <property type="pathway name" value="Activated point mutants of FGFR2"/>
</dbReference>
<dbReference type="Reactome" id="R-HSA-2219530">
    <molecule id="P55075-1"/>
    <property type="pathway name" value="Constitutive Signaling by Aberrant PI3K in Cancer"/>
</dbReference>
<dbReference type="Reactome" id="R-HSA-5654219">
    <molecule id="P55075-1"/>
    <property type="pathway name" value="Phospholipase C-mediated cascade: FGFR1"/>
</dbReference>
<dbReference type="Reactome" id="R-HSA-5654221">
    <molecule id="P55075-1"/>
    <property type="pathway name" value="Phospholipase C-mediated cascade, FGFR2"/>
</dbReference>
<dbReference type="Reactome" id="R-HSA-5654227">
    <molecule id="P55075-1"/>
    <property type="pathway name" value="Phospholipase C-mediated cascade, FGFR3"/>
</dbReference>
<dbReference type="Reactome" id="R-HSA-5654228">
    <molecule id="P55075-1"/>
    <property type="pathway name" value="Phospholipase C-mediated cascade, FGFR4"/>
</dbReference>
<dbReference type="Reactome" id="R-HSA-5654687">
    <molecule id="P55075-1"/>
    <property type="pathway name" value="Downstream signaling of activated FGFR1"/>
</dbReference>
<dbReference type="Reactome" id="R-HSA-5654688">
    <molecule id="P55075-1"/>
    <property type="pathway name" value="SHC-mediated cascade:FGFR1"/>
</dbReference>
<dbReference type="Reactome" id="R-HSA-5654689">
    <molecule id="P55075-1"/>
    <property type="pathway name" value="PI-3K cascade:FGFR1"/>
</dbReference>
<dbReference type="Reactome" id="R-HSA-5654693">
    <molecule id="P55075-1"/>
    <property type="pathway name" value="FRS-mediated FGFR1 signaling"/>
</dbReference>
<dbReference type="Reactome" id="R-HSA-5654695">
    <molecule id="P55075-1"/>
    <property type="pathway name" value="PI-3K cascade:FGFR2"/>
</dbReference>
<dbReference type="Reactome" id="R-HSA-5654699">
    <molecule id="P55075-1"/>
    <property type="pathway name" value="SHC-mediated cascade:FGFR2"/>
</dbReference>
<dbReference type="Reactome" id="R-HSA-5654700">
    <molecule id="P55075-1"/>
    <property type="pathway name" value="FRS-mediated FGFR2 signaling"/>
</dbReference>
<dbReference type="Reactome" id="R-HSA-5654704">
    <molecule id="P55075-1"/>
    <property type="pathway name" value="SHC-mediated cascade:FGFR3"/>
</dbReference>
<dbReference type="Reactome" id="R-HSA-5654706">
    <molecule id="P55075-1"/>
    <property type="pathway name" value="FRS-mediated FGFR3 signaling"/>
</dbReference>
<dbReference type="Reactome" id="R-HSA-5654710">
    <molecule id="P55075-1"/>
    <property type="pathway name" value="PI-3K cascade:FGFR3"/>
</dbReference>
<dbReference type="Reactome" id="R-HSA-5654712">
    <molecule id="P55075-1"/>
    <property type="pathway name" value="FRS-mediated FGFR4 signaling"/>
</dbReference>
<dbReference type="Reactome" id="R-HSA-5654719">
    <molecule id="P55075-1"/>
    <property type="pathway name" value="SHC-mediated cascade:FGFR4"/>
</dbReference>
<dbReference type="Reactome" id="R-HSA-5654720">
    <molecule id="P55075-1"/>
    <property type="pathway name" value="PI-3K cascade:FGFR4"/>
</dbReference>
<dbReference type="Reactome" id="R-HSA-5654726">
    <molecule id="P55075-1"/>
    <property type="pathway name" value="Negative regulation of FGFR1 signaling"/>
</dbReference>
<dbReference type="Reactome" id="R-HSA-5654727">
    <molecule id="P55075-1"/>
    <property type="pathway name" value="Negative regulation of FGFR2 signaling"/>
</dbReference>
<dbReference type="Reactome" id="R-HSA-5654732">
    <molecule id="P55075-1"/>
    <property type="pathway name" value="Negative regulation of FGFR3 signaling"/>
</dbReference>
<dbReference type="Reactome" id="R-HSA-5654733">
    <molecule id="P55075-1"/>
    <property type="pathway name" value="Negative regulation of FGFR4 signaling"/>
</dbReference>
<dbReference type="Reactome" id="R-HSA-5655253">
    <molecule id="P55075-1"/>
    <property type="pathway name" value="Signaling by FGFR2 in disease"/>
</dbReference>
<dbReference type="Reactome" id="R-HSA-5655302">
    <molecule id="P55075-1"/>
    <property type="pathway name" value="Signaling by FGFR1 in disease"/>
</dbReference>
<dbReference type="Reactome" id="R-HSA-5655332">
    <molecule id="P55075-1"/>
    <property type="pathway name" value="Signaling by FGFR3 in disease"/>
</dbReference>
<dbReference type="Reactome" id="R-HSA-5658623">
    <molecule id="P55075-1"/>
    <property type="pathway name" value="FGFRL1 modulation of FGFR1 signaling"/>
</dbReference>
<dbReference type="Reactome" id="R-HSA-5673001">
    <molecule id="P55075-1"/>
    <property type="pathway name" value="RAF/MAP kinase cascade"/>
</dbReference>
<dbReference type="Reactome" id="R-HSA-6811558">
    <molecule id="P55075-1"/>
    <property type="pathway name" value="PI5P, PP2A and IER3 Regulate PI3K/AKT Signaling"/>
</dbReference>
<dbReference type="Reactome" id="R-HSA-9832991">
    <property type="pathway name" value="Formation of the posterior neural plate"/>
</dbReference>
<dbReference type="SignaLink" id="P55075"/>
<dbReference type="SIGNOR" id="P55075"/>
<dbReference type="BioGRID-ORCS" id="2253">
    <property type="hits" value="13 hits in 1150 CRISPR screens"/>
</dbReference>
<dbReference type="EvolutionaryTrace" id="P55075"/>
<dbReference type="GeneWiki" id="FGF8"/>
<dbReference type="GenomeRNAi" id="2253"/>
<dbReference type="Pharos" id="P55075">
    <property type="development level" value="Tbio"/>
</dbReference>
<dbReference type="PRO" id="PR:P55075"/>
<dbReference type="Proteomes" id="UP000005640">
    <property type="component" value="Chromosome 10"/>
</dbReference>
<dbReference type="RNAct" id="P55075">
    <property type="molecule type" value="protein"/>
</dbReference>
<dbReference type="Bgee" id="ENSG00000107831">
    <property type="expression patterns" value="Expressed in primordial germ cell in gonad and 81 other cell types or tissues"/>
</dbReference>
<dbReference type="ExpressionAtlas" id="P55075">
    <property type="expression patterns" value="baseline and differential"/>
</dbReference>
<dbReference type="GO" id="GO:0005737">
    <property type="term" value="C:cytoplasm"/>
    <property type="evidence" value="ECO:0000318"/>
    <property type="project" value="GO_Central"/>
</dbReference>
<dbReference type="GO" id="GO:0009897">
    <property type="term" value="C:external side of plasma membrane"/>
    <property type="evidence" value="ECO:0007669"/>
    <property type="project" value="Ensembl"/>
</dbReference>
<dbReference type="GO" id="GO:0005576">
    <property type="term" value="C:extracellular region"/>
    <property type="evidence" value="ECO:0000304"/>
    <property type="project" value="Reactome"/>
</dbReference>
<dbReference type="GO" id="GO:0005615">
    <property type="term" value="C:extracellular space"/>
    <property type="evidence" value="ECO:0000314"/>
    <property type="project" value="UniProtKB"/>
</dbReference>
<dbReference type="GO" id="GO:0042056">
    <property type="term" value="F:chemoattractant activity"/>
    <property type="evidence" value="ECO:0007669"/>
    <property type="project" value="Ensembl"/>
</dbReference>
<dbReference type="GO" id="GO:0008083">
    <property type="term" value="F:growth factor activity"/>
    <property type="evidence" value="ECO:0000314"/>
    <property type="project" value="UniProtKB"/>
</dbReference>
<dbReference type="GO" id="GO:0005105">
    <property type="term" value="F:type 1 fibroblast growth factor receptor binding"/>
    <property type="evidence" value="ECO:0000314"/>
    <property type="project" value="UniProtKB"/>
</dbReference>
<dbReference type="GO" id="GO:0005111">
    <property type="term" value="F:type 2 fibroblast growth factor receptor binding"/>
    <property type="evidence" value="ECO:0000314"/>
    <property type="project" value="UniProtKB"/>
</dbReference>
<dbReference type="GO" id="GO:0009653">
    <property type="term" value="P:anatomical structure morphogenesis"/>
    <property type="evidence" value="ECO:0000303"/>
    <property type="project" value="UniProtKB"/>
</dbReference>
<dbReference type="GO" id="GO:0035909">
    <property type="term" value="P:aorta morphogenesis"/>
    <property type="evidence" value="ECO:0007669"/>
    <property type="project" value="Ensembl"/>
</dbReference>
<dbReference type="GO" id="GO:0001974">
    <property type="term" value="P:blood vessel remodeling"/>
    <property type="evidence" value="ECO:0007669"/>
    <property type="project" value="Ensembl"/>
</dbReference>
<dbReference type="GO" id="GO:0060348">
    <property type="term" value="P:bone development"/>
    <property type="evidence" value="ECO:0000315"/>
    <property type="project" value="UniProtKB"/>
</dbReference>
<dbReference type="GO" id="GO:0001569">
    <property type="term" value="P:branching involved in blood vessel morphogenesis"/>
    <property type="evidence" value="ECO:0007669"/>
    <property type="project" value="Ensembl"/>
</dbReference>
<dbReference type="GO" id="GO:0060445">
    <property type="term" value="P:branching involved in salivary gland morphogenesis"/>
    <property type="evidence" value="ECO:0007669"/>
    <property type="project" value="Ensembl"/>
</dbReference>
<dbReference type="GO" id="GO:0001658">
    <property type="term" value="P:branching involved in ureteric bud morphogenesis"/>
    <property type="evidence" value="ECO:0007669"/>
    <property type="project" value="Ensembl"/>
</dbReference>
<dbReference type="GO" id="GO:0045165">
    <property type="term" value="P:cell fate commitment"/>
    <property type="evidence" value="ECO:0007669"/>
    <property type="project" value="Ensembl"/>
</dbReference>
<dbReference type="GO" id="GO:0090134">
    <property type="term" value="P:cell migration involved in mesendoderm migration"/>
    <property type="evidence" value="ECO:0007669"/>
    <property type="project" value="Ensembl"/>
</dbReference>
<dbReference type="GO" id="GO:0021846">
    <property type="term" value="P:cell proliferation in forebrain"/>
    <property type="evidence" value="ECO:0007669"/>
    <property type="project" value="Ensembl"/>
</dbReference>
<dbReference type="GO" id="GO:0060128">
    <property type="term" value="P:corticotropin hormone secreting cell differentiation"/>
    <property type="evidence" value="ECO:0007669"/>
    <property type="project" value="Ensembl"/>
</dbReference>
<dbReference type="GO" id="GO:0071542">
    <property type="term" value="P:dopaminergic neuron differentiation"/>
    <property type="evidence" value="ECO:0000314"/>
    <property type="project" value="UniProtKB"/>
</dbReference>
<dbReference type="GO" id="GO:0033563">
    <property type="term" value="P:dorsal/ventral axon guidance"/>
    <property type="evidence" value="ECO:0007669"/>
    <property type="project" value="Ensembl"/>
</dbReference>
<dbReference type="GO" id="GO:0009953">
    <property type="term" value="P:dorsal/ventral pattern formation"/>
    <property type="evidence" value="ECO:0000318"/>
    <property type="project" value="GO_Central"/>
</dbReference>
<dbReference type="GO" id="GO:0035116">
    <property type="term" value="P:embryonic hindlimb morphogenesis"/>
    <property type="evidence" value="ECO:0007669"/>
    <property type="project" value="Ensembl"/>
</dbReference>
<dbReference type="GO" id="GO:0048702">
    <property type="term" value="P:embryonic neurocranium morphogenesis"/>
    <property type="evidence" value="ECO:0007669"/>
    <property type="project" value="Ensembl"/>
</dbReference>
<dbReference type="GO" id="GO:0003198">
    <property type="term" value="P:epithelial to mesenchymal transition involved in endocardial cushion formation"/>
    <property type="evidence" value="ECO:0000250"/>
    <property type="project" value="BHF-UCL"/>
</dbReference>
<dbReference type="GO" id="GO:0008543">
    <property type="term" value="P:fibroblast growth factor receptor signaling pathway"/>
    <property type="evidence" value="ECO:0000316"/>
    <property type="project" value="MGI"/>
</dbReference>
<dbReference type="GO" id="GO:0021798">
    <property type="term" value="P:forebrain dorsal/ventral pattern formation"/>
    <property type="evidence" value="ECO:0007669"/>
    <property type="project" value="Ensembl"/>
</dbReference>
<dbReference type="GO" id="GO:0048853">
    <property type="term" value="P:forebrain morphogenesis"/>
    <property type="evidence" value="ECO:0007669"/>
    <property type="project" value="Ensembl"/>
</dbReference>
<dbReference type="GO" id="GO:0021884">
    <property type="term" value="P:forebrain neuron development"/>
    <property type="evidence" value="ECO:0007669"/>
    <property type="project" value="Ensembl"/>
</dbReference>
<dbReference type="GO" id="GO:0007369">
    <property type="term" value="P:gastrulation"/>
    <property type="evidence" value="ECO:0000303"/>
    <property type="project" value="UniProtKB"/>
</dbReference>
<dbReference type="GO" id="GO:0008406">
    <property type="term" value="P:gonad development"/>
    <property type="evidence" value="ECO:0000315"/>
    <property type="project" value="UniProtKB"/>
</dbReference>
<dbReference type="GO" id="GO:0001947">
    <property type="term" value="P:heart looping"/>
    <property type="evidence" value="ECO:0007669"/>
    <property type="project" value="Ensembl"/>
</dbReference>
<dbReference type="GO" id="GO:0120223">
    <property type="term" value="P:larynx morphogenesis"/>
    <property type="evidence" value="ECO:0007669"/>
    <property type="project" value="Ensembl"/>
</dbReference>
<dbReference type="GO" id="GO:0060425">
    <property type="term" value="P:lung morphogenesis"/>
    <property type="evidence" value="ECO:0007669"/>
    <property type="project" value="Ensembl"/>
</dbReference>
<dbReference type="GO" id="GO:0030539">
    <property type="term" value="P:male genitalia development"/>
    <property type="evidence" value="ECO:0007669"/>
    <property type="project" value="Ensembl"/>
</dbReference>
<dbReference type="GO" id="GO:0000165">
    <property type="term" value="P:MAPK cascade"/>
    <property type="evidence" value="ECO:0007669"/>
    <property type="project" value="Ensembl"/>
</dbReference>
<dbReference type="GO" id="GO:0008078">
    <property type="term" value="P:mesodermal cell migration"/>
    <property type="evidence" value="ECO:0007669"/>
    <property type="project" value="Ensembl"/>
</dbReference>
<dbReference type="GO" id="GO:0001823">
    <property type="term" value="P:mesonephros development"/>
    <property type="evidence" value="ECO:0000270"/>
    <property type="project" value="UniProtKB"/>
</dbReference>
<dbReference type="GO" id="GO:0001656">
    <property type="term" value="P:metanephros development"/>
    <property type="evidence" value="ECO:0000270"/>
    <property type="project" value="UniProtKB"/>
</dbReference>
<dbReference type="GO" id="GO:0030917">
    <property type="term" value="P:midbrain-hindbrain boundary development"/>
    <property type="evidence" value="ECO:0007669"/>
    <property type="project" value="Ensembl"/>
</dbReference>
<dbReference type="GO" id="GO:0140014">
    <property type="term" value="P:mitotic nuclear division"/>
    <property type="evidence" value="ECO:0007669"/>
    <property type="project" value="Ensembl"/>
</dbReference>
<dbReference type="GO" id="GO:0008045">
    <property type="term" value="P:motor neuron axon guidance"/>
    <property type="evidence" value="ECO:0007669"/>
    <property type="project" value="Ensembl"/>
</dbReference>
<dbReference type="GO" id="GO:0055026">
    <property type="term" value="P:negative regulation of cardiac muscle tissue development"/>
    <property type="evidence" value="ECO:0000315"/>
    <property type="project" value="BHF-UCL"/>
</dbReference>
<dbReference type="GO" id="GO:0043524">
    <property type="term" value="P:negative regulation of neuron apoptotic process"/>
    <property type="evidence" value="ECO:0007669"/>
    <property type="project" value="Ensembl"/>
</dbReference>
<dbReference type="GO" id="GO:0001839">
    <property type="term" value="P:neural plate morphogenesis"/>
    <property type="evidence" value="ECO:0007669"/>
    <property type="project" value="Ensembl"/>
</dbReference>
<dbReference type="GO" id="GO:0060563">
    <property type="term" value="P:neuroepithelial cell differentiation"/>
    <property type="evidence" value="ECO:0000314"/>
    <property type="project" value="UniProtKB"/>
</dbReference>
<dbReference type="GO" id="GO:0022008">
    <property type="term" value="P:neurogenesis"/>
    <property type="evidence" value="ECO:0000318"/>
    <property type="project" value="GO_Central"/>
</dbReference>
<dbReference type="GO" id="GO:0051402">
    <property type="term" value="P:neuron apoptotic process"/>
    <property type="evidence" value="ECO:0007669"/>
    <property type="project" value="Ensembl"/>
</dbReference>
<dbReference type="GO" id="GO:0042476">
    <property type="term" value="P:odontogenesis"/>
    <property type="evidence" value="ECO:0000270"/>
    <property type="project" value="UniProtKB"/>
</dbReference>
<dbReference type="GO" id="GO:0035265">
    <property type="term" value="P:organ growth"/>
    <property type="evidence" value="ECO:0007669"/>
    <property type="project" value="Ensembl"/>
</dbReference>
<dbReference type="GO" id="GO:0001759">
    <property type="term" value="P:organ induction"/>
    <property type="evidence" value="ECO:0007669"/>
    <property type="project" value="Ensembl"/>
</dbReference>
<dbReference type="GO" id="GO:0030916">
    <property type="term" value="P:otic vesicle formation"/>
    <property type="evidence" value="ECO:0007669"/>
    <property type="project" value="Ensembl"/>
</dbReference>
<dbReference type="GO" id="GO:0003148">
    <property type="term" value="P:outflow tract septum morphogenesis"/>
    <property type="evidence" value="ECO:0000250"/>
    <property type="project" value="UniProtKB"/>
</dbReference>
<dbReference type="GO" id="GO:0021543">
    <property type="term" value="P:pallium development"/>
    <property type="evidence" value="ECO:0007669"/>
    <property type="project" value="Ensembl"/>
</dbReference>
<dbReference type="GO" id="GO:0060037">
    <property type="term" value="P:pharyngeal system development"/>
    <property type="evidence" value="ECO:0007669"/>
    <property type="project" value="Ensembl"/>
</dbReference>
<dbReference type="GO" id="GO:0045597">
    <property type="term" value="P:positive regulation of cell differentiation"/>
    <property type="evidence" value="ECO:0000304"/>
    <property type="project" value="ParkinsonsUK-UCL"/>
</dbReference>
<dbReference type="GO" id="GO:0051781">
    <property type="term" value="P:positive regulation of cell division"/>
    <property type="evidence" value="ECO:0007669"/>
    <property type="project" value="UniProtKB-KW"/>
</dbReference>
<dbReference type="GO" id="GO:0008284">
    <property type="term" value="P:positive regulation of cell population proliferation"/>
    <property type="evidence" value="ECO:0000314"/>
    <property type="project" value="UniProtKB"/>
</dbReference>
<dbReference type="GO" id="GO:0070374">
    <property type="term" value="P:positive regulation of ERK1 and ERK2 cascade"/>
    <property type="evidence" value="ECO:0007669"/>
    <property type="project" value="Ensembl"/>
</dbReference>
<dbReference type="GO" id="GO:0045745">
    <property type="term" value="P:positive regulation of G protein-coupled receptor signaling pathway"/>
    <property type="evidence" value="ECO:0007669"/>
    <property type="project" value="Ensembl"/>
</dbReference>
<dbReference type="GO" id="GO:0010628">
    <property type="term" value="P:positive regulation of gene expression"/>
    <property type="evidence" value="ECO:0000304"/>
    <property type="project" value="ParkinsonsUK-UCL"/>
</dbReference>
<dbReference type="GO" id="GO:0043410">
    <property type="term" value="P:positive regulation of MAPK cascade"/>
    <property type="evidence" value="ECO:0000318"/>
    <property type="project" value="GO_Central"/>
</dbReference>
<dbReference type="GO" id="GO:0045840">
    <property type="term" value="P:positive regulation of mitotic nuclear division"/>
    <property type="evidence" value="ECO:0007669"/>
    <property type="project" value="Ensembl"/>
</dbReference>
<dbReference type="GO" id="GO:0046622">
    <property type="term" value="P:positive regulation of organ growth"/>
    <property type="evidence" value="ECO:0007669"/>
    <property type="project" value="Ensembl"/>
</dbReference>
<dbReference type="GO" id="GO:2000648">
    <property type="term" value="P:positive regulation of stem cell proliferation"/>
    <property type="evidence" value="ECO:0007669"/>
    <property type="project" value="Ensembl"/>
</dbReference>
<dbReference type="GO" id="GO:0030334">
    <property type="term" value="P:regulation of cell migration"/>
    <property type="evidence" value="ECO:0000318"/>
    <property type="project" value="GO_Central"/>
</dbReference>
<dbReference type="GO" id="GO:0042487">
    <property type="term" value="P:regulation of odontogenesis of dentin-containing tooth"/>
    <property type="evidence" value="ECO:0007669"/>
    <property type="project" value="Ensembl"/>
</dbReference>
<dbReference type="GO" id="GO:0006979">
    <property type="term" value="P:response to oxidative stress"/>
    <property type="evidence" value="ECO:0007669"/>
    <property type="project" value="Ensembl"/>
</dbReference>
<dbReference type="GO" id="GO:0009410">
    <property type="term" value="P:response to xenobiotic stimulus"/>
    <property type="evidence" value="ECO:0007669"/>
    <property type="project" value="Ensembl"/>
</dbReference>
<dbReference type="GO" id="GO:0023019">
    <property type="term" value="P:signal transduction involved in regulation of gene expression"/>
    <property type="evidence" value="ECO:0007669"/>
    <property type="project" value="Ensembl"/>
</dbReference>
<dbReference type="GO" id="GO:0072089">
    <property type="term" value="P:stem cell proliferation"/>
    <property type="evidence" value="ECO:0007669"/>
    <property type="project" value="Ensembl"/>
</dbReference>
<dbReference type="GO" id="GO:0021544">
    <property type="term" value="P:subpallium development"/>
    <property type="evidence" value="ECO:0007669"/>
    <property type="project" value="Ensembl"/>
</dbReference>
<dbReference type="GO" id="GO:0030878">
    <property type="term" value="P:thyroid gland development"/>
    <property type="evidence" value="ECO:0007669"/>
    <property type="project" value="Ensembl"/>
</dbReference>
<dbReference type="GO" id="GO:0060129">
    <property type="term" value="P:thyroid-stimulating hormone-secreting cell differentiation"/>
    <property type="evidence" value="ECO:0007669"/>
    <property type="project" value="Ensembl"/>
</dbReference>
<dbReference type="CDD" id="cd23322">
    <property type="entry name" value="beta-trefoil_FGF8"/>
    <property type="match status" value="1"/>
</dbReference>
<dbReference type="FunFam" id="2.80.10.50:FF:000007">
    <property type="entry name" value="Fibroblast growth factor"/>
    <property type="match status" value="1"/>
</dbReference>
<dbReference type="Gene3D" id="2.80.10.50">
    <property type="match status" value="1"/>
</dbReference>
<dbReference type="IDEAL" id="IID00557"/>
<dbReference type="InterPro" id="IPR002209">
    <property type="entry name" value="Fibroblast_GF_fam"/>
</dbReference>
<dbReference type="InterPro" id="IPR008996">
    <property type="entry name" value="IL1/FGF"/>
</dbReference>
<dbReference type="PANTHER" id="PTHR11486">
    <property type="entry name" value="FIBROBLAST GROWTH FACTOR"/>
    <property type="match status" value="1"/>
</dbReference>
<dbReference type="Pfam" id="PF00167">
    <property type="entry name" value="FGF"/>
    <property type="match status" value="1"/>
</dbReference>
<dbReference type="PRINTS" id="PR00262">
    <property type="entry name" value="IL1HBGF"/>
</dbReference>
<dbReference type="SMART" id="SM00442">
    <property type="entry name" value="FGF"/>
    <property type="match status" value="1"/>
</dbReference>
<dbReference type="SUPFAM" id="SSF50353">
    <property type="entry name" value="Cytokine"/>
    <property type="match status" value="1"/>
</dbReference>
<dbReference type="PROSITE" id="PS00247">
    <property type="entry name" value="HBGF_FGF"/>
    <property type="match status" value="1"/>
</dbReference>
<gene>
    <name type="primary">FGF8</name>
    <name type="synonym">AIGF</name>
</gene>
<comment type="function">
    <text evidence="2 3 5 8">Plays an important role in the regulation of embryonic development, cell proliferation, cell differentiation and cell migration. Required for normal brain, eye, ear and limb development during embryogenesis. Required for normal development of the gonadotropin-releasing hormone (GnRH) neuronal system (PubMed:16384934, PubMed:16597617, PubMed:8663044). Plays a role in neurite outgrowth in hippocampal cells (PubMed:21576111).</text>
</comment>
<comment type="subunit">
    <text evidence="2 3 8">Monomer. Homodimer. Interacts with FGFR1, FGFR2, FGFR3 and FGFR4. Affinity between fibroblast growth factors (FGFs) and their receptors is increased by heparan sulfate glycosaminoglycans that function as coreceptors.</text>
</comment>
<comment type="subcellular location">
    <subcellularLocation>
        <location>Secreted</location>
    </subcellularLocation>
</comment>
<comment type="alternative products">
    <event type="alternative splicing"/>
    <isoform>
        <id>P55075-1</id>
        <name>FGF-8E</name>
        <sequence type="displayed"/>
    </isoform>
    <isoform>
        <id>P55075-2</id>
        <name>FGF-8A</name>
        <sequence type="described" ref="VSP_001525"/>
    </isoform>
    <isoform>
        <id>P55075-3</id>
        <name>FGF-8B</name>
        <sequence type="described" ref="VSP_001524"/>
    </isoform>
    <isoform>
        <id>P55075-4</id>
        <name>FGF-8F</name>
        <sequence type="described" ref="VSP_001526"/>
    </isoform>
    <text>Additional isoforms seem to exist.</text>
</comment>
<comment type="developmental stage">
    <text>In adults expression is restricted to the gonads.</text>
</comment>
<comment type="disease" evidence="4 6">
    <disease id="DI-00622">
        <name>Hypogonadotropic hypogonadism 6 with or without anosmia</name>
        <acronym>HH6</acronym>
        <description>A disorder characterized by absent or incomplete sexual maturation by the age of 18 years, in conjunction with low levels of circulating gonadotropins and testosterone and no other abnormalities of the hypothalamic-pituitary axis. In some cases, it is associated with non-reproductive phenotypes, such as anosmia, cleft palate, and sensorineural hearing loss. Anosmia or hyposmia is related to the absence or hypoplasia of the olfactory bulbs and tracts. Hypogonadism is due to deficiency in gonadotropin-releasing hormone and probably results from a failure of embryonic migration of gonadotropin-releasing hormone-synthesizing neurons. In the presence of anosmia, idiopathic hypogonadotropic hypogonadism is referred to as Kallmann syndrome, whereas in the presence of a normal sense of smell, it has been termed normosmic idiopathic hypogonadotropic hypogonadism (nIHH).</description>
        <dbReference type="MIM" id="612702"/>
    </disease>
    <text evidence="6">The disease is caused by variants affecting distinct genetic loci, including the gene represented in this entry. The genetics of hypogonadotropic hypogonadism involves various modes of transmission. Oligogenic inheritance has been reported in some patients carrying mutations in FGF8 as well as in other HH-associated genes including FGFR1 (PubMed:23643382).</text>
</comment>
<comment type="disease" evidence="7">
    <disease id="DI-06232">
        <name>Hypoplastic femurs and pelvis</name>
        <acronym>HYPOFP</acronym>
        <description>An autosomal dominant disorder characterized by isolated bilateral hypoplasia of the femoral and pelvic bones.</description>
        <dbReference type="MIM" id="619545"/>
    </disease>
    <text evidence="7">The gene represented in this entry is involved in disease pathogenesis. Duplications encompassing the FGF8 locus have been found in unrelated families with isolated bilateral hypoplasia of the femoral and pelvic bone. The phenotype is most likely the result of position effects causing altered FGF8 expression rather than gene dosage.</text>
</comment>
<comment type="similarity">
    <text evidence="13">Belongs to the heparin-binding growth factors family.</text>
</comment>
<comment type="online information" name="Atlas of Genetics and Cytogenetics in Oncology and Haematology">
    <link uri="https://atlasgeneticsoncology.org/gene/40566/FGF8"/>
</comment>
<keyword id="KW-0002">3D-structure</keyword>
<keyword id="KW-0025">Alternative splicing</keyword>
<keyword id="KW-0217">Developmental protein</keyword>
<keyword id="KW-0221">Differentiation</keyword>
<keyword id="KW-0225">Disease variant</keyword>
<keyword id="KW-0325">Glycoprotein</keyword>
<keyword id="KW-0339">Growth factor</keyword>
<keyword id="KW-1016">Hypogonadotropic hypogonadism</keyword>
<keyword id="KW-0956">Kallmann syndrome</keyword>
<keyword id="KW-0497">Mitogen</keyword>
<keyword id="KW-1185">Reference proteome</keyword>
<keyword id="KW-0964">Secreted</keyword>
<keyword id="KW-0732">Signal</keyword>
<proteinExistence type="evidence at protein level"/>
<protein>
    <recommendedName>
        <fullName>Fibroblast growth factor 8</fullName>
        <shortName>FGF-8</shortName>
    </recommendedName>
    <alternativeName>
        <fullName>Androgen-induced growth factor</fullName>
        <shortName>AIGF</shortName>
    </alternativeName>
    <alternativeName>
        <fullName>Heparin-binding growth factor 8</fullName>
        <shortName>HBGF-8</shortName>
    </alternativeName>
</protein>
<organism>
    <name type="scientific">Homo sapiens</name>
    <name type="common">Human</name>
    <dbReference type="NCBI Taxonomy" id="9606"/>
    <lineage>
        <taxon>Eukaryota</taxon>
        <taxon>Metazoa</taxon>
        <taxon>Chordata</taxon>
        <taxon>Craniata</taxon>
        <taxon>Vertebrata</taxon>
        <taxon>Euteleostomi</taxon>
        <taxon>Mammalia</taxon>
        <taxon>Eutheria</taxon>
        <taxon>Euarchontoglires</taxon>
        <taxon>Primates</taxon>
        <taxon>Haplorrhini</taxon>
        <taxon>Catarrhini</taxon>
        <taxon>Hominidae</taxon>
        <taxon>Homo</taxon>
    </lineage>
</organism>
<sequence>MGSPRSALSCLLLHLLVLCLQAQEGPGRGPALGRELASLFRAGREPQGVSQQHVREQSLVTDQLSRRLIRTYQLYSRTSGKHVQVLANKRINAMAEDGDPFAKLIVETDTFGSRVRVRGAETGLYICMNKKGKLIAKSNGKGKDCVFTEIVLENNYTALQNAKYEGWYMAFTRKGRPRKGSKTRQHQREVHFMKRLPRGHHTTEQSLRFEFLNYPPFTRSLRGSQRTWAPEPR</sequence>
<reference key="1">
    <citation type="journal article" date="1995" name="FEBS Lett.">
        <title>Human androgen-induced growth factor in prostate and breast cancer cells: its molecular cloning and growth properties.</title>
        <authorList>
            <person name="Tanaka A."/>
            <person name="Miyamoto K."/>
            <person name="Matsuo H."/>
            <person name="Matsumoto K."/>
            <person name="Yoshida H."/>
        </authorList>
    </citation>
    <scope>NUCLEOTIDE SEQUENCE [GENOMIC DNA] (ISOFORM FGF-8A)</scope>
</reference>
<reference key="2">
    <citation type="journal article" date="1996" name="Cell Growth Differ.">
        <title>Molecular cloning and characterization of human FGF8 alternative messenger RNA forms.</title>
        <authorList>
            <person name="Ghosh A.K."/>
            <person name="Shankar D.B."/>
            <person name="Shackleford G.M."/>
            <person name="Wu K."/>
            <person name="T'Ang A."/>
            <person name="Miller G.J."/>
            <person name="Zheng J."/>
            <person name="Roy-Burman P."/>
        </authorList>
    </citation>
    <scope>NUCLEOTIDE SEQUENCE [MRNA] (ISOFORMS FGF-8A; FGF-8B AND FGF-8E)</scope>
    <source>
        <tissue>Prostate</tissue>
    </source>
</reference>
<reference key="3">
    <citation type="journal article" date="1996" name="Genomics">
        <title>Structure and sequence of human FGF8.</title>
        <authorList>
            <person name="Gemel J."/>
            <person name="Gorry M."/>
            <person name="Ehrlich G.D."/>
            <person name="Macarthur C.A."/>
        </authorList>
    </citation>
    <scope>NUCLEOTIDE SEQUENCE [GENOMIC DNA]</scope>
    <scope>ALTERNATIVE SPLICING (ISOFORMS FGF-8B; FGF-8E AND FGF-8F)</scope>
    <source>
        <tissue>Placenta</tissue>
    </source>
</reference>
<reference key="4">
    <citation type="journal article" date="1996" name="Oncogene">
        <title>The human FGF-8 gene localizes on chromosome 10q24 and is subjected to induction by androgen in breast cancer cells.</title>
        <authorList>
            <person name="Payson R.A."/>
            <person name="Wu J."/>
            <person name="Liu Y."/>
            <person name="Chiu I.-M."/>
        </authorList>
    </citation>
    <scope>NUCLEOTIDE SEQUENCE [GENOMIC DNA / MRNA] (ISOFORMS FGF-8A AND FGF-8F)</scope>
</reference>
<reference key="5">
    <citation type="journal article" date="2001" name="Dig. Dis. Sci.">
        <title>A novel isoform of human fibroblast growth factor 8 is induced by androgens and associated with progression of esophageal carcinoma.</title>
        <authorList>
            <person name="Tanaka S."/>
            <person name="Ueo H."/>
            <person name="Mafune K."/>
            <person name="Mori M."/>
            <person name="Wands J.R."/>
            <person name="Sugimachi K."/>
        </authorList>
    </citation>
    <scope>NUCLEOTIDE SEQUENCE [MRNA] (ISOFORM FGF-8F)</scope>
    <source>
        <tissue>Esophageal carcinoma</tissue>
    </source>
</reference>
<reference key="6">
    <citation type="submission" date="2002-06" db="EMBL/GenBank/DDBJ databases">
        <authorList>
            <consortium name="NIEHS SNPs program"/>
        </authorList>
    </citation>
    <scope>NUCLEOTIDE SEQUENCE [GENOMIC DNA]</scope>
    <scope>ALTERNATIVE SPLICING (ISOFORM FGF-8F)</scope>
</reference>
<reference key="7">
    <citation type="submission" date="2005-09" db="EMBL/GenBank/DDBJ databases">
        <authorList>
            <person name="Mural R.J."/>
            <person name="Istrail S."/>
            <person name="Sutton G.G."/>
            <person name="Florea L."/>
            <person name="Halpern A.L."/>
            <person name="Mobarry C.M."/>
            <person name="Lippert R."/>
            <person name="Walenz B."/>
            <person name="Shatkay H."/>
            <person name="Dew I."/>
            <person name="Miller J.R."/>
            <person name="Flanigan M.J."/>
            <person name="Edwards N.J."/>
            <person name="Bolanos R."/>
            <person name="Fasulo D."/>
            <person name="Halldorsson B.V."/>
            <person name="Hannenhalli S."/>
            <person name="Turner R."/>
            <person name="Yooseph S."/>
            <person name="Lu F."/>
            <person name="Nusskern D.R."/>
            <person name="Shue B.C."/>
            <person name="Zheng X.H."/>
            <person name="Zhong F."/>
            <person name="Delcher A.L."/>
            <person name="Huson D.H."/>
            <person name="Kravitz S.A."/>
            <person name="Mouchard L."/>
            <person name="Reinert K."/>
            <person name="Remington K.A."/>
            <person name="Clark A.G."/>
            <person name="Waterman M.S."/>
            <person name="Eichler E.E."/>
            <person name="Adams M.D."/>
            <person name="Hunkapiller M.W."/>
            <person name="Myers E.W."/>
            <person name="Venter J.C."/>
        </authorList>
    </citation>
    <scope>NUCLEOTIDE SEQUENCE [LARGE SCALE GENOMIC DNA]</scope>
</reference>
<reference key="8">
    <citation type="journal article" date="2004" name="Genome Res.">
        <title>The status, quality, and expansion of the NIH full-length cDNA project: the Mammalian Gene Collection (MGC).</title>
        <authorList>
            <consortium name="The MGC Project Team"/>
        </authorList>
    </citation>
    <scope>NUCLEOTIDE SEQUENCE [LARGE SCALE MRNA] (ISOFORM FGF-8A)</scope>
</reference>
<reference key="9">
    <citation type="journal article" date="1996" name="J. Biol. Chem.">
        <title>Receptor specificity of the fibroblast growth factor family.</title>
        <authorList>
            <person name="Ornitz D.M."/>
            <person name="Xu J."/>
            <person name="Colvin J.S."/>
            <person name="McEwen D.G."/>
            <person name="MacArthur C.A."/>
            <person name="Coulier F."/>
            <person name="Gao G."/>
            <person name="Goldfarb M."/>
        </authorList>
    </citation>
    <scope>INTERACTION WITH FGFR3 AND FGFR4</scope>
    <scope>FUNCTION IN CELL PROLIFERATION</scope>
</reference>
<reference key="10">
    <citation type="journal article" date="2006" name="J. Biol. Chem.">
        <title>Receptor specificity of the fibroblast growth factor family. The complete mammalian FGF family.</title>
        <authorList>
            <person name="Zhang X."/>
            <person name="Ibrahimi O.A."/>
            <person name="Olsen S.K."/>
            <person name="Umemori H."/>
            <person name="Mohammadi M."/>
            <person name="Ornitz D.M."/>
        </authorList>
    </citation>
    <scope>INTERACTION WITH FGFR1; FGFR2; FGFR3 AND FGFR4</scope>
    <scope>FUNCTION IN STIMULATION OF CELL PROLIFERATION</scope>
</reference>
<reference key="11">
    <citation type="journal article" date="2010" name="Nat. Rev. Cancer">
        <title>Fibroblast growth factor signalling: from development to cancer.</title>
        <authorList>
            <person name="Turner N."/>
            <person name="Grose R."/>
        </authorList>
    </citation>
    <scope>REVIEW</scope>
</reference>
<reference key="12">
    <citation type="journal article" date="2011" name="Brain">
        <title>Senataxin modulates neurite growth through fibroblast growth factor 8 signalling.</title>
        <authorList>
            <person name="Vantaggiato C."/>
            <person name="Bondioni S."/>
            <person name="Airoldi G."/>
            <person name="Bozzato A."/>
            <person name="Borsani G."/>
            <person name="Rugarli E.I."/>
            <person name="Bresolin N."/>
            <person name="Clementi E."/>
            <person name="Bassi M.T."/>
        </authorList>
    </citation>
    <scope>FUNCTION</scope>
</reference>
<reference key="13">
    <citation type="journal article" date="2021" name="Am. J. Hum. Genet.">
        <title>Position effects at the FGF8 locus are associated with femoral hypoplasia.</title>
        <authorList>
            <person name="Socha M."/>
            <person name="Sowinska-Seidler A."/>
            <person name="Melo U.S."/>
            <person name="Kragesteen B.K."/>
            <person name="Franke M."/>
            <person name="Heinrich V."/>
            <person name="Schoepflin R."/>
            <person name="Nagel I."/>
            <person name="Gruchy N."/>
            <person name="Mundlos S."/>
            <person name="Sreenivasan V.K.A."/>
            <person name="Lopez C."/>
            <person name="Vingron M."/>
            <person name="Bukowska-Olech E."/>
            <person name="Spielmann M."/>
            <person name="Jamsheer A."/>
        </authorList>
    </citation>
    <scope>INVOLVEMENT IN HYPOFP</scope>
</reference>
<reference key="14">
    <citation type="journal article" date="2006" name="Genes Dev.">
        <title>Structural basis by which alternative splicing modulates the organizer activity of FGF8 in the brain.</title>
        <authorList>
            <person name="Olsen S.K."/>
            <person name="Li J.Y.H."/>
            <person name="Bromleigh C."/>
            <person name="Eliseenkova A.V."/>
            <person name="Ibrahimi O.A."/>
            <person name="Lao Z."/>
            <person name="Zhang F."/>
            <person name="Linhardt R.J."/>
            <person name="Joyner A.L."/>
            <person name="Mohammadi M."/>
        </authorList>
    </citation>
    <scope>X-RAY CRYSTALLOGRAPHY (2.28 ANGSTROMS) OF 52-204 IN COMPLEX WITH FGFR2</scope>
    <scope>FUNCTION</scope>
</reference>
<reference key="15">
    <citation type="journal article" date="2008" name="J. Clin. Invest.">
        <title>Decreased FGF8 signaling causes deficiency of gonadotropin-releasing hormone in humans and mice.</title>
        <authorList>
            <person name="Falardeau J."/>
            <person name="Chung W.C.J."/>
            <person name="Beenken A."/>
            <person name="Raivio T."/>
            <person name="Plummer L."/>
            <person name="Sidis Y."/>
            <person name="Jacobson-Dickman E.E."/>
            <person name="Eliseenkova A.V."/>
            <person name="Ma J."/>
            <person name="Dwyer A."/>
            <person name="Quinton R."/>
            <person name="Na S."/>
            <person name="Hall J.E."/>
            <person name="Huot C."/>
            <person name="Alois N."/>
            <person name="Pearce S.H."/>
            <person name="Cole L.W."/>
            <person name="Hughes V."/>
            <person name="Mohammadi M."/>
            <person name="Tsai P."/>
            <person name="Pitteloud N."/>
        </authorList>
    </citation>
    <scope>VARIANTS HH6 ASN-14; LEU-26; LEU-40; GLU-89; GLY-116 AND MET-218</scope>
</reference>
<reference key="16">
    <citation type="journal article" date="2013" name="Am. J. Hum. Genet.">
        <title>Mutations in FGF17, IL17RD, DUSP6, SPRY4, and FLRT3 are identified in individuals with congenital hypogonadotropic hypogonadism.</title>
        <authorList>
            <person name="Miraoui H."/>
            <person name="Dwyer A.A."/>
            <person name="Sykiotis G.P."/>
            <person name="Plummer L."/>
            <person name="Chung W."/>
            <person name="Feng B."/>
            <person name="Beenken A."/>
            <person name="Clarke J."/>
            <person name="Pers T.H."/>
            <person name="Dworzynski P."/>
            <person name="Keefe K."/>
            <person name="Niedziela M."/>
            <person name="Raivio T."/>
            <person name="Crowley W.F. Jr."/>
            <person name="Seminara S.B."/>
            <person name="Quinton R."/>
            <person name="Hughes V.A."/>
            <person name="Kumanov P."/>
            <person name="Young J."/>
            <person name="Yialamas M.A."/>
            <person name="Hall J.E."/>
            <person name="Van Vliet G."/>
            <person name="Chanoine J.P."/>
            <person name="Rubenstein J."/>
            <person name="Mohammadi M."/>
            <person name="Tsai P.S."/>
            <person name="Sidis Y."/>
            <person name="Lage K."/>
            <person name="Pitteloud N."/>
        </authorList>
    </citation>
    <scope>VARIANTS HH6 LEU-40 AND GLU-89</scope>
</reference>
<accession>P55075</accession>
<accession>A1A514</accession>
<accession>Q14915</accession>
<accession>Q15766</accession>
<name>FGF8_HUMAN</name>